<feature type="chain" id="PRO_0000418552" description="Snake venom metalloproteinase BleucMP">
    <location>
        <begin position="1" status="less than"/>
        <end position="9" status="greater than"/>
    </location>
</feature>
<feature type="non-terminal residue">
    <location>
        <position position="1"/>
    </location>
</feature>
<feature type="non-terminal residue">
    <location>
        <position position="9"/>
    </location>
</feature>
<name>VM1B_BOTLC</name>
<keyword id="KW-0903">Direct protein sequencing</keyword>
<keyword id="KW-1015">Disulfide bond</keyword>
<keyword id="KW-1206">Fibrinogenolytic toxin</keyword>
<keyword id="KW-1205">Fibrinolytic toxin</keyword>
<keyword id="KW-1199">Hemostasis impairing toxin</keyword>
<keyword id="KW-0378">Hydrolase</keyword>
<keyword id="KW-0479">Metal-binding</keyword>
<keyword id="KW-0482">Metalloprotease</keyword>
<keyword id="KW-0645">Protease</keyword>
<keyword id="KW-0964">Secreted</keyword>
<keyword id="KW-0800">Toxin</keyword>
<keyword id="KW-0862">Zinc</keyword>
<proteinExistence type="evidence at protein level"/>
<accession>P0DJJ6</accession>
<evidence type="ECO:0000250" key="1"/>
<evidence type="ECO:0000269" key="2">
    <source>
    </source>
</evidence>
<evidence type="ECO:0000305" key="3"/>
<evidence type="ECO:0000305" key="4">
    <source>
    </source>
</evidence>
<comment type="function">
    <text evidence="2">Snake venom zinc metalloprotease that has fibrino(geno)lytic activities. Hydrolyzes the alpha-chain (FGA) and more slowly the beta-chain of fibrinogen (FGB), without affecting the gamma-chain. Preferentially hydrolyzes the beta-chain (FGB) of fibrin. In vivo, shows a low edema-inducing effect. This action may be attributed to degradation of proteins in the cell membrane and consequent release of inflammatory mediators and leukocyte infiltrate.</text>
</comment>
<comment type="cofactor">
    <cofactor evidence="1">
        <name>Zn(2+)</name>
        <dbReference type="ChEBI" id="CHEBI:29105"/>
    </cofactor>
    <text evidence="1">Binds 1 zinc ion per subunit.</text>
</comment>
<comment type="activity regulation">
    <text evidence="2">Inhibited by EDTA and 1,10-phenanthroline. Not inhibited by beta-mercaptoethanol, benzamidine and aprotinin.</text>
</comment>
<comment type="subunit">
    <text evidence="2">Monomer.</text>
</comment>
<comment type="subcellular location">
    <subcellularLocation>
        <location>Secreted</location>
    </subcellularLocation>
</comment>
<comment type="tissue specificity">
    <text>Expressed by the venom gland.</text>
</comment>
<comment type="PTM">
    <text>Contains 7 disulfide bonds.</text>
</comment>
<comment type="mass spectrometry" mass="23057.54" method="MALDI" evidence="2"/>
<comment type="miscellaneous">
    <text evidence="4">Negative results: is devoid of coagulant activities on bovine plasma. In vivo, does not induce hemorrhage on mice back skin when 50 ug of enzyme are intradermally injected (PubMed:21130897).</text>
</comment>
<comment type="similarity">
    <text evidence="3">Belongs to the venom metalloproteinase (M12B) family. P-I subfamily.</text>
</comment>
<comment type="caution">
    <text evidence="4">If fragments identified by mass spectrometry (and not included in this entry) are taken into account for comparison, this protein is 71% identical to the metalloproteinase from the same venom leucurolysin-A (AC P84907).</text>
</comment>
<sequence length="9" mass="1096">TLTSFGEWR</sequence>
<protein>
    <recommendedName>
        <fullName>Snake venom metalloproteinase BleucMP</fullName>
        <shortName>SVMP</shortName>
        <ecNumber>3.4.24.-</ecNumber>
    </recommendedName>
</protein>
<dbReference type="EC" id="3.4.24.-"/>
<dbReference type="GO" id="GO:0005576">
    <property type="term" value="C:extracellular region"/>
    <property type="evidence" value="ECO:0000304"/>
    <property type="project" value="UniProtKB"/>
</dbReference>
<dbReference type="GO" id="GO:0043655">
    <property type="term" value="C:host extracellular space"/>
    <property type="evidence" value="ECO:0000304"/>
    <property type="project" value="UniProtKB"/>
</dbReference>
<dbReference type="GO" id="GO:0046872">
    <property type="term" value="F:metal ion binding"/>
    <property type="evidence" value="ECO:0000314"/>
    <property type="project" value="UniProtKB"/>
</dbReference>
<dbReference type="GO" id="GO:0008237">
    <property type="term" value="F:metallopeptidase activity"/>
    <property type="evidence" value="ECO:0000314"/>
    <property type="project" value="UniProtKB"/>
</dbReference>
<dbReference type="GO" id="GO:0090729">
    <property type="term" value="F:toxin activity"/>
    <property type="evidence" value="ECO:0007669"/>
    <property type="project" value="UniProtKB-KW"/>
</dbReference>
<dbReference type="GO" id="GO:0006508">
    <property type="term" value="P:proteolysis"/>
    <property type="evidence" value="ECO:0007669"/>
    <property type="project" value="UniProtKB-KW"/>
</dbReference>
<dbReference type="GO" id="GO:0044398">
    <property type="term" value="P:venom-mediated edema in another organism"/>
    <property type="evidence" value="ECO:0000314"/>
    <property type="project" value="UniProtKB"/>
</dbReference>
<dbReference type="GO" id="GO:0044485">
    <property type="term" value="P:venom-mediated fibrinogenolysis in another organism"/>
    <property type="evidence" value="ECO:0000314"/>
    <property type="project" value="UniProtKB"/>
</dbReference>
<dbReference type="GO" id="GO:0044484">
    <property type="term" value="P:venom-mediated fibrinolysis"/>
    <property type="evidence" value="ECO:0000314"/>
    <property type="project" value="UniProtKB"/>
</dbReference>
<organism>
    <name type="scientific">Bothrops leucurus</name>
    <name type="common">Whitetail lancehead</name>
    <dbReference type="NCBI Taxonomy" id="157295"/>
    <lineage>
        <taxon>Eukaryota</taxon>
        <taxon>Metazoa</taxon>
        <taxon>Chordata</taxon>
        <taxon>Craniata</taxon>
        <taxon>Vertebrata</taxon>
        <taxon>Euteleostomi</taxon>
        <taxon>Lepidosauria</taxon>
        <taxon>Squamata</taxon>
        <taxon>Bifurcata</taxon>
        <taxon>Unidentata</taxon>
        <taxon>Episquamata</taxon>
        <taxon>Toxicofera</taxon>
        <taxon>Serpentes</taxon>
        <taxon>Colubroidea</taxon>
        <taxon>Viperidae</taxon>
        <taxon>Crotalinae</taxon>
        <taxon>Bothrops</taxon>
    </lineage>
</organism>
<reference key="1">
    <citation type="journal article" date="2011" name="Comp. Biochem. Physiol.">
        <title>Purification and functional characterization of a new metalloproteinase (BleucMP) from Bothrops leucurus snake venom.</title>
        <authorList>
            <person name="Gomes M.S."/>
            <person name="de Queiroz M.R."/>
            <person name="Mamede C.C."/>
            <person name="Mendes M.M."/>
            <person name="Hamaguchi A."/>
            <person name="Homsi-Brandeburgo M.I."/>
            <person name="Sousa M.V."/>
            <person name="Aquino E.N."/>
            <person name="Castro M.S."/>
            <person name="de Oliveira F."/>
            <person name="Rodrigues V.M."/>
        </authorList>
    </citation>
    <scope>PROTEIN SEQUENCE</scope>
    <scope>FUNCTION</scope>
    <scope>SUBUNIT</scope>
    <scope>ACTIVITY REGULATION</scope>
    <scope>MASS SPECTROMETRY</scope>
    <scope>IDENTIFICATION BY MASS SPECTROMETRY</scope>
    <source>
        <tissue>Venom</tissue>
    </source>
</reference>